<gene>
    <name type="primary">N</name>
</gene>
<protein>
    <recommendedName>
        <fullName>Nucleoprotein</fullName>
        <shortName>NP</shortName>
    </recommendedName>
    <alternativeName>
        <fullName>Nucleocapsid protein</fullName>
        <shortName>Protein N</shortName>
    </alternativeName>
</protein>
<keyword id="KW-0002">3D-structure</keyword>
<keyword id="KW-0167">Capsid protein</keyword>
<keyword id="KW-1139">Helical capsid protein</keyword>
<keyword id="KW-1035">Host cytoplasm</keyword>
<keyword id="KW-0597">Phosphoprotein</keyword>
<keyword id="KW-0687">Ribonucleoprotein</keyword>
<keyword id="KW-0694">RNA-binding</keyword>
<keyword id="KW-0766">Superantigen</keyword>
<keyword id="KW-0543">Viral nucleoprotein</keyword>
<keyword id="KW-0946">Virion</keyword>
<comment type="function">
    <text evidence="1">Encapsidates the genome in a ratio of one protein N per nine ribonucleotides, protecting it from nucleases. If expressed without protein P it binds non-specifically RNA and therefore can bind it's own mRNA. Interaction with protein P abolishes any non-specific RNA binding, and prevents phosphorylation. The soluble N-P complex encapsidates specifically the genomic RNA, with protein N protecting the genome like a pearl necklace. The encapsidated genomic RNA is termed the nucleocapsid (NC) and serves as template for viral transcription and replication. Protein N binds protein P in the NC through a different interaction, and can be phosphorylated. Subsequent viral replication is dependent on intracellular concentration of newly synthesized protein N. During replication, encapsidation by protein N is coupled to RNA synthesis and all replicative products are resistant to nucleases (By similarity).</text>
</comment>
<comment type="subunit">
    <text evidence="1">Homomultimerizes to form the nucleocapsid. Binds to viral genomic RNA. In nucleocapsid, binds protein P and thereby positions the polymerase on the template. Protein P acts as a chaperone on free protein N to prevent it from aggregation before encapsidating genomic RNA (By similarity).</text>
</comment>
<comment type="subcellular location">
    <subcellularLocation>
        <location>Virion</location>
    </subcellularLocation>
    <subcellularLocation>
        <location evidence="1">Host cytoplasm</location>
    </subcellularLocation>
</comment>
<comment type="PTM">
    <text evidence="1">Phosphorylated by host CK2. Unphosphorylated protein N seems to have a better affinity for leader viral promoter encapsidation. Phosphorylation of protein N in ribonucleocapsid may stabilize the interaction with protein P, thereby playing an important role in viral transcription/replication (By similarity).</text>
</comment>
<comment type="miscellaneous">
    <text evidence="1">Displays a superantigen activity in human and mouse, activating mostly V-beta-8 subtypes of T-cell receptor.</text>
</comment>
<comment type="similarity">
    <text evidence="2">Belongs to the lyssavirus nucleocapsid protein family.</text>
</comment>
<reference key="1">
    <citation type="journal article" date="2003" name="J. Virol.">
        <title>Glycoprotein of nonpathogenic rabies viruses is a key determinant of human cell apoptosis.</title>
        <authorList>
            <person name="Prehaud C."/>
            <person name="Lay S."/>
            <person name="Dietzschold B."/>
            <person name="Lafon M."/>
        </authorList>
    </citation>
    <scope>NUCLEOTIDE SEQUENCE [GENOMIC RNA]</scope>
    <source>
        <strain>CVS-2003</strain>
    </source>
</reference>
<reference key="2">
    <citation type="submission" date="2001-08" db="EMBL/GenBank/DDBJ databases">
        <authorList>
            <person name="Prehaud C.J."/>
            <person name="Lay S.J."/>
        </authorList>
    </citation>
    <scope>NUCLEOTIDE SEQUENCE [GENOMIC RNA]</scope>
    <source>
        <strain>CVS-2001</strain>
    </source>
</reference>
<reference key="3">
    <citation type="submission" date="2007-01" db="EMBL/GenBank/DDBJ databases">
        <title>Complete nucleotide sequencing of SAD derivatives of attenuated rabies virus vaccine strains.</title>
        <authorList>
            <person name="Geue L."/>
            <person name="Schares S."/>
            <person name="Schnick C."/>
            <person name="Kliemt J."/>
            <person name="Beckert A."/>
            <person name="Hoffmann B."/>
            <person name="Freuling C."/>
            <person name="Marston D."/>
            <person name="McElhinney L."/>
            <person name="Fooks A."/>
            <person name="Zanoni R."/>
            <person name="Peterhans E."/>
            <person name="Cox J."/>
            <person name="Mueller T."/>
        </authorList>
    </citation>
    <scope>NUCLEOTIDE SEQUENCE [GENOMIC RNA]</scope>
    <source>
        <strain>ERA</strain>
    </source>
</reference>
<reference key="4">
    <citation type="journal article" date="2006" name="Science">
        <title>Crystal structure of the rabies virus nucleoprotein-RNA complex.</title>
        <authorList>
            <person name="Albertini A.A."/>
            <person name="Wernimont A.K."/>
            <person name="Muziol T."/>
            <person name="Ravelli R.B."/>
            <person name="Clapier C.R."/>
            <person name="Schoehn G."/>
            <person name="Weissenhorn W."/>
            <person name="Ruigrok R.W."/>
        </authorList>
    </citation>
    <scope>X-RAY CRYSTALLOGRAPHY (3.49 ANGSTROMS)</scope>
</reference>
<sequence>MDADKIVFKVNNQVVSLKPEIIVDQHEYKYPAIKDLKKPCITLGKAPDLNKAYKSVLSGMSAAKLDPDDVCSYLAAAMQFFEGTCPEDWTSYGIVIARKGDKITPGSLVEIKRTDVEGNWALTGGMELTRDPTVPEHASLVGLLLSLYRLSKISGQNTGNYKTNIADRIEQIFETAPFVKIVEHHTLMTTHKMCANWSTIPNFRFLAGTYDMFFSRIEHLYSAIRVGTVVTAYEDCSGLVSFTGFIKQINLTAREAILYFFHKNFEEEIRRMFEPGQETAVPHSYFIHFRSLGLSGKSPYSSNAVGHVFNLIHFVGCYMGQVRSLNATVIAACAPHEMSVLGGYLGEEFFGKGTFERRFFRDEKELQEYEAAELTKTDVALADDGTVNSDDEDYFSGETRSPEAVYTRIMMNGGRLKRSHIRRYVSVSSNHQARPNSFAEFLNKTYSSDS</sequence>
<proteinExistence type="evidence at protein level"/>
<accession>P0DOF3</accession>
<accession>Q7TBN9</accession>
<organismHost>
    <name type="scientific">Homo sapiens</name>
    <name type="common">Human</name>
    <dbReference type="NCBI Taxonomy" id="9606"/>
</organismHost>
<organismHost>
    <name type="scientific">Mammalia</name>
    <dbReference type="NCBI Taxonomy" id="40674"/>
</organismHost>
<feature type="chain" id="PRO_0000295209" description="Nucleoprotein">
    <location>
        <begin position="1"/>
        <end position="450"/>
    </location>
</feature>
<feature type="modified residue" description="Phosphoserine; by host CK2" evidence="1">
    <location>
        <position position="389"/>
    </location>
</feature>
<feature type="strand" evidence="3">
    <location>
        <begin position="7"/>
        <end position="19"/>
    </location>
</feature>
<feature type="strand" evidence="3">
    <location>
        <begin position="40"/>
        <end position="43"/>
    </location>
</feature>
<feature type="helix" evidence="3">
    <location>
        <begin position="49"/>
        <end position="62"/>
    </location>
</feature>
<feature type="helix" evidence="3">
    <location>
        <begin position="67"/>
        <end position="77"/>
    </location>
</feature>
<feature type="turn" evidence="3">
    <location>
        <begin position="78"/>
        <end position="80"/>
    </location>
</feature>
<feature type="strand" evidence="3">
    <location>
        <begin position="95"/>
        <end position="97"/>
    </location>
</feature>
<feature type="helix" evidence="3">
    <location>
        <begin position="105"/>
        <end position="107"/>
    </location>
</feature>
<feature type="strand" evidence="3">
    <location>
        <begin position="109"/>
        <end position="113"/>
    </location>
</feature>
<feature type="helix" evidence="3">
    <location>
        <begin position="134"/>
        <end position="152"/>
    </location>
</feature>
<feature type="strand" evidence="3">
    <location>
        <begin position="155"/>
        <end position="157"/>
    </location>
</feature>
<feature type="helix" evidence="3">
    <location>
        <begin position="159"/>
        <end position="174"/>
    </location>
</feature>
<feature type="helix" evidence="3">
    <location>
        <begin position="186"/>
        <end position="193"/>
    </location>
</feature>
<feature type="turn" evidence="3">
    <location>
        <begin position="194"/>
        <end position="196"/>
    </location>
</feature>
<feature type="helix" evidence="3">
    <location>
        <begin position="197"/>
        <end position="199"/>
    </location>
</feature>
<feature type="helix" evidence="3">
    <location>
        <begin position="201"/>
        <end position="216"/>
    </location>
</feature>
<feature type="helix" evidence="3">
    <location>
        <begin position="222"/>
        <end position="224"/>
    </location>
</feature>
<feature type="helix" evidence="3">
    <location>
        <begin position="225"/>
        <end position="228"/>
    </location>
</feature>
<feature type="helix" evidence="3">
    <location>
        <begin position="229"/>
        <end position="231"/>
    </location>
</feature>
<feature type="turn" evidence="3">
    <location>
        <begin position="232"/>
        <end position="235"/>
    </location>
</feature>
<feature type="helix" evidence="3">
    <location>
        <begin position="237"/>
        <end position="249"/>
    </location>
</feature>
<feature type="helix" evidence="3">
    <location>
        <begin position="253"/>
        <end position="258"/>
    </location>
</feature>
<feature type="helix" evidence="3">
    <location>
        <begin position="265"/>
        <end position="272"/>
    </location>
</feature>
<feature type="helix" evidence="3">
    <location>
        <begin position="285"/>
        <end position="288"/>
    </location>
</feature>
<feature type="turn" evidence="3">
    <location>
        <begin position="289"/>
        <end position="291"/>
    </location>
</feature>
<feature type="strand" evidence="3">
    <location>
        <begin position="292"/>
        <end position="294"/>
    </location>
</feature>
<feature type="turn" evidence="3">
    <location>
        <begin position="302"/>
        <end position="305"/>
    </location>
</feature>
<feature type="helix" evidence="3">
    <location>
        <begin position="306"/>
        <end position="318"/>
    </location>
</feature>
<feature type="helix" evidence="3">
    <location>
        <begin position="322"/>
        <end position="325"/>
    </location>
</feature>
<feature type="strand" evidence="3">
    <location>
        <begin position="331"/>
        <end position="333"/>
    </location>
</feature>
<feature type="helix" evidence="3">
    <location>
        <begin position="335"/>
        <end position="349"/>
    </location>
</feature>
<feature type="strand" evidence="3">
    <location>
        <begin position="359"/>
        <end position="362"/>
    </location>
</feature>
<feature type="helix" evidence="3">
    <location>
        <begin position="363"/>
        <end position="371"/>
    </location>
</feature>
<feature type="helix" evidence="3">
    <location>
        <begin position="402"/>
        <end position="411"/>
    </location>
</feature>
<feature type="turn" evidence="3">
    <location>
        <begin position="412"/>
        <end position="414"/>
    </location>
</feature>
<feature type="helix" evidence="3">
    <location>
        <begin position="418"/>
        <end position="429"/>
    </location>
</feature>
<feature type="helix" evidence="3">
    <location>
        <begin position="438"/>
        <end position="445"/>
    </location>
</feature>
<name>NCAP_RABVE</name>
<dbReference type="EMBL" id="AF406696">
    <property type="protein sequence ID" value="AAP81753.1"/>
    <property type="molecule type" value="Genomic_RNA"/>
</dbReference>
<dbReference type="EMBL" id="EF206707">
    <property type="protein sequence ID" value="ABN11291.1"/>
    <property type="molecule type" value="Genomic_RNA"/>
</dbReference>
<dbReference type="PDB" id="2GTT">
    <property type="method" value="X-ray"/>
    <property type="resolution" value="3.49 A"/>
    <property type="chains" value="A/B/C/D/E/F/G/H/I/J/K/L/M/N/O/P/Q/R/S/T/U/V=1-450"/>
</dbReference>
<dbReference type="PDBsum" id="2GTT"/>
<dbReference type="SMR" id="P0DOF3"/>
<dbReference type="EvolutionaryTrace" id="P0DOF3"/>
<dbReference type="Proteomes" id="UP000008619">
    <property type="component" value="Genome"/>
</dbReference>
<dbReference type="GO" id="GO:0019029">
    <property type="term" value="C:helical viral capsid"/>
    <property type="evidence" value="ECO:0007669"/>
    <property type="project" value="UniProtKB-KW"/>
</dbReference>
<dbReference type="GO" id="GO:0030430">
    <property type="term" value="C:host cell cytoplasm"/>
    <property type="evidence" value="ECO:0007669"/>
    <property type="project" value="UniProtKB-SubCell"/>
</dbReference>
<dbReference type="GO" id="GO:1990904">
    <property type="term" value="C:ribonucleoprotein complex"/>
    <property type="evidence" value="ECO:0007669"/>
    <property type="project" value="UniProtKB-KW"/>
</dbReference>
<dbReference type="GO" id="GO:0019013">
    <property type="term" value="C:viral nucleocapsid"/>
    <property type="evidence" value="ECO:0007669"/>
    <property type="project" value="UniProtKB-KW"/>
</dbReference>
<dbReference type="GO" id="GO:0003723">
    <property type="term" value="F:RNA binding"/>
    <property type="evidence" value="ECO:0007669"/>
    <property type="project" value="UniProtKB-KW"/>
</dbReference>
<dbReference type="Gene3D" id="1.10.3610.10">
    <property type="entry name" value="Nucleoprotein"/>
    <property type="match status" value="1"/>
</dbReference>
<dbReference type="Gene3D" id="1.10.3570.10">
    <property type="entry name" value="Rhabdovirus nucleocapsid protein like domain"/>
    <property type="match status" value="1"/>
</dbReference>
<dbReference type="InterPro" id="IPR000448">
    <property type="entry name" value="Rhabdo_ncapsid"/>
</dbReference>
<dbReference type="InterPro" id="IPR023331">
    <property type="entry name" value="Rhabdovirus_ncapsid_C"/>
</dbReference>
<dbReference type="InterPro" id="IPR023330">
    <property type="entry name" value="Rhabdovirus_ncapsid_N"/>
</dbReference>
<dbReference type="InterPro" id="IPR035961">
    <property type="entry name" value="Rhabdovirus_nucleoprotein-like"/>
</dbReference>
<dbReference type="Pfam" id="PF00945">
    <property type="entry name" value="Rhabdo_ncap"/>
    <property type="match status" value="1"/>
</dbReference>
<dbReference type="SUPFAM" id="SSF140809">
    <property type="entry name" value="Rhabdovirus nucleoprotein-like"/>
    <property type="match status" value="1"/>
</dbReference>
<organism>
    <name type="scientific">Rabies virus (strain ERA)</name>
    <name type="common">RABV</name>
    <dbReference type="NCBI Taxonomy" id="11295"/>
    <lineage>
        <taxon>Viruses</taxon>
        <taxon>Riboviria</taxon>
        <taxon>Orthornavirae</taxon>
        <taxon>Negarnaviricota</taxon>
        <taxon>Haploviricotina</taxon>
        <taxon>Monjiviricetes</taxon>
        <taxon>Mononegavirales</taxon>
        <taxon>Rhabdoviridae</taxon>
        <taxon>Alpharhabdovirinae</taxon>
        <taxon>Lyssavirus</taxon>
        <taxon>Lyssavirus rabies</taxon>
    </lineage>
</organism>
<evidence type="ECO:0000250" key="1"/>
<evidence type="ECO:0000305" key="2"/>
<evidence type="ECO:0007829" key="3">
    <source>
        <dbReference type="PDB" id="2GTT"/>
    </source>
</evidence>